<accession>Q9A2M2</accession>
<name>AMGK_CAUVC</name>
<gene>
    <name evidence="1" type="primary">amgK</name>
    <name evidence="5" type="ordered locus">CC_3535</name>
</gene>
<feature type="chain" id="PRO_0000441268" description="N-acetylmuramate/N-acetylglucosamine kinase">
    <location>
        <begin position="1"/>
        <end position="363"/>
    </location>
</feature>
<keyword id="KW-0067">ATP-binding</keyword>
<keyword id="KW-0119">Carbohydrate metabolism</keyword>
<keyword id="KW-0133">Cell shape</keyword>
<keyword id="KW-0961">Cell wall biogenesis/degradation</keyword>
<keyword id="KW-0418">Kinase</keyword>
<keyword id="KW-0547">Nucleotide-binding</keyword>
<keyword id="KW-0573">Peptidoglycan synthesis</keyword>
<keyword id="KW-1185">Reference proteome</keyword>
<keyword id="KW-0808">Transferase</keyword>
<comment type="function">
    <text evidence="1 2">Sugar kinase that catalyzes the ATP-dependent phosphorylation of N-acetylmuramate (MurNAc) and N-acetylglucosamine (GlcNAc) at its C1 hydroxyl group, leading to MurNAc alpha-1P and GlcNAc alpha-1P, respectively (By similarity). Is likely involved in peptidoglycan recycling as part of a cell wall recycling pathway that bypasses de novo biosynthesis of the peptidoglycan precursor UDP-MurNAc (PubMed:23831760). Is able to complement the fosfomycin sensitivity phenotype of a P.putida mutant lacking amgK (PubMed:23831760).</text>
</comment>
<comment type="catalytic activity">
    <reaction evidence="1">
        <text>N-acetyl-D-muramate + ATP = N-acetyl-alpha-D-muramate 1-phosphate + ADP + H(+)</text>
        <dbReference type="Rhea" id="RHEA:53720"/>
        <dbReference type="ChEBI" id="CHEBI:15378"/>
        <dbReference type="ChEBI" id="CHEBI:28881"/>
        <dbReference type="ChEBI" id="CHEBI:30616"/>
        <dbReference type="ChEBI" id="CHEBI:137594"/>
        <dbReference type="ChEBI" id="CHEBI:456216"/>
        <dbReference type="EC" id="2.7.1.221"/>
    </reaction>
</comment>
<comment type="catalytic activity">
    <reaction evidence="1">
        <text>N-acetyl-D-glucosamine + ATP = N-acetyl-alpha-D-glucosamine 1-phosphate + ADP + H(+)</text>
        <dbReference type="Rhea" id="RHEA:53724"/>
        <dbReference type="ChEBI" id="CHEBI:15378"/>
        <dbReference type="ChEBI" id="CHEBI:30616"/>
        <dbReference type="ChEBI" id="CHEBI:57776"/>
        <dbReference type="ChEBI" id="CHEBI:456216"/>
        <dbReference type="ChEBI" id="CHEBI:506227"/>
    </reaction>
</comment>
<comment type="pathway">
    <text evidence="4">Cell wall biogenesis; peptidoglycan recycling.</text>
</comment>
<comment type="similarity">
    <text evidence="3">Belongs to the kinase AmgK family.</text>
</comment>
<protein>
    <recommendedName>
        <fullName evidence="1">N-acetylmuramate/N-acetylglucosamine kinase</fullName>
        <shortName evidence="1">MurNAc/GlcNAc kinase</shortName>
        <ecNumber evidence="1">2.7.1.221</ecNumber>
    </recommendedName>
</protein>
<dbReference type="EC" id="2.7.1.221" evidence="1"/>
<dbReference type="EMBL" id="AE005673">
    <property type="protein sequence ID" value="AAK25497.1"/>
    <property type="molecule type" value="Genomic_DNA"/>
</dbReference>
<dbReference type="PIR" id="E87687">
    <property type="entry name" value="E87687"/>
</dbReference>
<dbReference type="RefSeq" id="NP_422329.1">
    <property type="nucleotide sequence ID" value="NC_002696.2"/>
</dbReference>
<dbReference type="RefSeq" id="WP_010921364.1">
    <property type="nucleotide sequence ID" value="NC_002696.2"/>
</dbReference>
<dbReference type="SMR" id="Q9A2M2"/>
<dbReference type="STRING" id="190650.CC_3535"/>
<dbReference type="EnsemblBacteria" id="AAK25497">
    <property type="protein sequence ID" value="AAK25497"/>
    <property type="gene ID" value="CC_3535"/>
</dbReference>
<dbReference type="KEGG" id="ccr:CC_3535"/>
<dbReference type="PATRIC" id="fig|190650.5.peg.3541"/>
<dbReference type="eggNOG" id="COG3178">
    <property type="taxonomic scope" value="Bacteria"/>
</dbReference>
<dbReference type="HOGENOM" id="CLU_021467_2_0_5"/>
<dbReference type="BioCyc" id="CAULO:CC3535-MONOMER"/>
<dbReference type="UniPathway" id="UPA00544"/>
<dbReference type="Proteomes" id="UP000001816">
    <property type="component" value="Chromosome"/>
</dbReference>
<dbReference type="GO" id="GO:0005524">
    <property type="term" value="F:ATP binding"/>
    <property type="evidence" value="ECO:0007669"/>
    <property type="project" value="UniProtKB-KW"/>
</dbReference>
<dbReference type="GO" id="GO:0016301">
    <property type="term" value="F:kinase activity"/>
    <property type="evidence" value="ECO:0007669"/>
    <property type="project" value="UniProtKB-KW"/>
</dbReference>
<dbReference type="GO" id="GO:0071555">
    <property type="term" value="P:cell wall organization"/>
    <property type="evidence" value="ECO:0007669"/>
    <property type="project" value="UniProtKB-KW"/>
</dbReference>
<dbReference type="GO" id="GO:0009252">
    <property type="term" value="P:peptidoglycan biosynthetic process"/>
    <property type="evidence" value="ECO:0007669"/>
    <property type="project" value="UniProtKB-KW"/>
</dbReference>
<dbReference type="GO" id="GO:0009254">
    <property type="term" value="P:peptidoglycan turnover"/>
    <property type="evidence" value="ECO:0007669"/>
    <property type="project" value="UniProtKB-UniPathway"/>
</dbReference>
<dbReference type="GO" id="GO:0008360">
    <property type="term" value="P:regulation of cell shape"/>
    <property type="evidence" value="ECO:0007669"/>
    <property type="project" value="UniProtKB-KW"/>
</dbReference>
<dbReference type="Gene3D" id="3.90.1200.10">
    <property type="match status" value="1"/>
</dbReference>
<dbReference type="Gene3D" id="3.30.200.20">
    <property type="entry name" value="Phosphorylase Kinase, domain 1"/>
    <property type="match status" value="1"/>
</dbReference>
<dbReference type="InterPro" id="IPR002575">
    <property type="entry name" value="Aminoglycoside_PTrfase"/>
</dbReference>
<dbReference type="InterPro" id="IPR011009">
    <property type="entry name" value="Kinase-like_dom_sf"/>
</dbReference>
<dbReference type="NCBIfam" id="NF045698">
    <property type="entry name" value="MurGlcNAcKinAmgK"/>
    <property type="match status" value="1"/>
</dbReference>
<dbReference type="Pfam" id="PF01636">
    <property type="entry name" value="APH"/>
    <property type="match status" value="1"/>
</dbReference>
<dbReference type="SUPFAM" id="SSF56112">
    <property type="entry name" value="Protein kinase-like (PK-like)"/>
    <property type="match status" value="1"/>
</dbReference>
<organism>
    <name type="scientific">Caulobacter vibrioides (strain ATCC 19089 / CIP 103742 / CB 15)</name>
    <name type="common">Caulobacter crescentus</name>
    <dbReference type="NCBI Taxonomy" id="190650"/>
    <lineage>
        <taxon>Bacteria</taxon>
        <taxon>Pseudomonadati</taxon>
        <taxon>Pseudomonadota</taxon>
        <taxon>Alphaproteobacteria</taxon>
        <taxon>Caulobacterales</taxon>
        <taxon>Caulobacteraceae</taxon>
        <taxon>Caulobacter</taxon>
    </lineage>
</organism>
<reference key="1">
    <citation type="journal article" date="2001" name="Proc. Natl. Acad. Sci. U.S.A.">
        <title>Complete genome sequence of Caulobacter crescentus.</title>
        <authorList>
            <person name="Nierman W.C."/>
            <person name="Feldblyum T.V."/>
            <person name="Laub M.T."/>
            <person name="Paulsen I.T."/>
            <person name="Nelson K.E."/>
            <person name="Eisen J.A."/>
            <person name="Heidelberg J.F."/>
            <person name="Alley M.R.K."/>
            <person name="Ohta N."/>
            <person name="Maddock J.R."/>
            <person name="Potocka I."/>
            <person name="Nelson W.C."/>
            <person name="Newton A."/>
            <person name="Stephens C."/>
            <person name="Phadke N.D."/>
            <person name="Ely B."/>
            <person name="DeBoy R.T."/>
            <person name="Dodson R.J."/>
            <person name="Durkin A.S."/>
            <person name="Gwinn M.L."/>
            <person name="Haft D.H."/>
            <person name="Kolonay J.F."/>
            <person name="Smit J."/>
            <person name="Craven M.B."/>
            <person name="Khouri H.M."/>
            <person name="Shetty J."/>
            <person name="Berry K.J."/>
            <person name="Utterback T.R."/>
            <person name="Tran K."/>
            <person name="Wolf A.M."/>
            <person name="Vamathevan J.J."/>
            <person name="Ermolaeva M.D."/>
            <person name="White O."/>
            <person name="Salzberg S.L."/>
            <person name="Venter J.C."/>
            <person name="Shapiro L."/>
            <person name="Fraser C.M."/>
        </authorList>
    </citation>
    <scope>NUCLEOTIDE SEQUENCE [LARGE SCALE GENOMIC DNA]</scope>
    <source>
        <strain>ATCC 19089 / CIP 103742 / CB 15</strain>
    </source>
</reference>
<reference key="2">
    <citation type="journal article" date="2013" name="Nat. Chem. Biol.">
        <title>A cell wall recycling shortcut that bypasses peptidoglycan de novo biosynthesis.</title>
        <authorList>
            <person name="Gisin J."/>
            <person name="Schneider A."/>
            <person name="Naegele B."/>
            <person name="Borisova M."/>
            <person name="Mayer C."/>
        </authorList>
    </citation>
    <scope>FUNCTION</scope>
    <scope>PATHWAY</scope>
    <source>
        <strain>ATCC 19089 / CIP 103742 / CB 15</strain>
    </source>
</reference>
<proteinExistence type="inferred from homology"/>
<sequence>MTLSSEREAAKAAFLSANGFGDVRRESLGGDASTRAYERLHRGEQSYIFMDQPPSLETAPCPPDASPAERAALGYNALARLAAGRVDAFVACAGWLNAQGLSAPKVLAADPAAGLAVLEDLGDDLYARLIEAGTDEAPLYDAAIDGLLAIHAAPTPKVLRYDGSTWPLLTYDDLALKTAHDIFVEWQPRFRDISFDAAALAEWEAIWAPIRAKGEADATVFCHRDYHAENLIWLPERDGAARVGMLDFQDAVLAHPAWDLSMLLHDARRTVSPEREAACLDRYLAARPELDRTAFLAGYHALGALNIIRILGIFARLVTRDGKPRYADFIPRLWVYLDVCFADPALAELKAWFDRYVPVETRR</sequence>
<evidence type="ECO:0000250" key="1">
    <source>
        <dbReference type="UniProtKB" id="Q88QT3"/>
    </source>
</evidence>
<evidence type="ECO:0000269" key="2">
    <source>
    </source>
</evidence>
<evidence type="ECO:0000305" key="3"/>
<evidence type="ECO:0000305" key="4">
    <source>
    </source>
</evidence>
<evidence type="ECO:0000312" key="5">
    <source>
        <dbReference type="EMBL" id="AAK25497.1"/>
    </source>
</evidence>